<feature type="chain" id="PRO_0000077812" description="Mu-like prophage FluMu protein gp16">
    <location>
        <begin position="1"/>
        <end position="185"/>
    </location>
</feature>
<organism>
    <name type="scientific">Haemophilus influenzae (strain ATCC 51907 / DSM 11121 / KW20 / Rd)</name>
    <dbReference type="NCBI Taxonomy" id="71421"/>
    <lineage>
        <taxon>Bacteria</taxon>
        <taxon>Pseudomonadati</taxon>
        <taxon>Pseudomonadota</taxon>
        <taxon>Gammaproteobacteria</taxon>
        <taxon>Pasteurellales</taxon>
        <taxon>Pasteurellaceae</taxon>
        <taxon>Haemophilus</taxon>
    </lineage>
</organism>
<comment type="similarity">
    <text evidence="1">To phage Mu protein gp16.</text>
</comment>
<name>VG16_HAEIN</name>
<sequence length="185" mass="20955">MSEKAKLIQLIHIGKQQLNMDEFSYREMVKRLTNKTSSTKCTVVELLKILHEMQQKGAKVKHFAKRGTKPTAYSPATGEVKVKSEIAHKIRAVWIQMGKHGFLADPSXKALNSYMRKVMNKGKSVLALNVGALNSNDASRFLEILKKWHKRVMLKRLAEKYGCITSAETGYDELCLVFKNYQGVA</sequence>
<keyword id="KW-1185">Reference proteome</keyword>
<dbReference type="EMBL" id="L42023">
    <property type="protein sequence ID" value="AAC23133.1"/>
    <property type="molecule type" value="Genomic_DNA"/>
</dbReference>
<dbReference type="PIR" id="E64126">
    <property type="entry name" value="E64126"/>
</dbReference>
<dbReference type="RefSeq" id="NP_439638.1">
    <property type="nucleotide sequence ID" value="NC_000907.1"/>
</dbReference>
<dbReference type="STRING" id="71421.HI_1488"/>
<dbReference type="DNASU" id="950788"/>
<dbReference type="EnsemblBacteria" id="AAC23133">
    <property type="protein sequence ID" value="AAC23133"/>
    <property type="gene ID" value="HI_1488"/>
</dbReference>
<dbReference type="KEGG" id="hin:HI_1488"/>
<dbReference type="PATRIC" id="fig|71421.8.peg.1556"/>
<dbReference type="eggNOG" id="COG4382">
    <property type="taxonomic scope" value="Bacteria"/>
</dbReference>
<dbReference type="HOGENOM" id="CLU_107084_1_0_6"/>
<dbReference type="OrthoDB" id="7360086at2"/>
<dbReference type="PhylomeDB" id="P71387"/>
<dbReference type="BioCyc" id="HINF71421:G1GJ1-1512-MONOMER"/>
<dbReference type="Proteomes" id="UP000000579">
    <property type="component" value="Chromosome"/>
</dbReference>
<dbReference type="InterPro" id="IPR009363">
    <property type="entry name" value="Phage_Mu_Gp16"/>
</dbReference>
<dbReference type="Pfam" id="PF06252">
    <property type="entry name" value="GemA"/>
    <property type="match status" value="1"/>
</dbReference>
<proteinExistence type="predicted"/>
<reference key="1">
    <citation type="journal article" date="1995" name="Science">
        <title>Whole-genome random sequencing and assembly of Haemophilus influenzae Rd.</title>
        <authorList>
            <person name="Fleischmann R.D."/>
            <person name="Adams M.D."/>
            <person name="White O."/>
            <person name="Clayton R.A."/>
            <person name="Kirkness E.F."/>
            <person name="Kerlavage A.R."/>
            <person name="Bult C.J."/>
            <person name="Tomb J.-F."/>
            <person name="Dougherty B.A."/>
            <person name="Merrick J.M."/>
            <person name="McKenney K."/>
            <person name="Sutton G.G."/>
            <person name="FitzHugh W."/>
            <person name="Fields C.A."/>
            <person name="Gocayne J.D."/>
            <person name="Scott J.D."/>
            <person name="Shirley R."/>
            <person name="Liu L.-I."/>
            <person name="Glodek A."/>
            <person name="Kelley J.M."/>
            <person name="Weidman J.F."/>
            <person name="Phillips C.A."/>
            <person name="Spriggs T."/>
            <person name="Hedblom E."/>
            <person name="Cotton M.D."/>
            <person name="Utterback T.R."/>
            <person name="Hanna M.C."/>
            <person name="Nguyen D.T."/>
            <person name="Saudek D.M."/>
            <person name="Brandon R.C."/>
            <person name="Fine L.D."/>
            <person name="Fritchman J.L."/>
            <person name="Fuhrmann J.L."/>
            <person name="Geoghagen N.S.M."/>
            <person name="Gnehm C.L."/>
            <person name="McDonald L.A."/>
            <person name="Small K.V."/>
            <person name="Fraser C.M."/>
            <person name="Smith H.O."/>
            <person name="Venter J.C."/>
        </authorList>
    </citation>
    <scope>NUCLEOTIDE SEQUENCE [LARGE SCALE GENOMIC DNA]</scope>
    <source>
        <strain>ATCC 51907 / DSM 11121 / KW20 / Rd</strain>
    </source>
</reference>
<protein>
    <recommendedName>
        <fullName>Mu-like prophage FluMu protein gp16</fullName>
    </recommendedName>
</protein>
<accession>P71387</accession>
<gene>
    <name type="ordered locus">HI_1488</name>
</gene>
<evidence type="ECO:0000305" key="1"/>